<name>MSCL_XANC8</name>
<protein>
    <recommendedName>
        <fullName evidence="1">Large-conductance mechanosensitive channel</fullName>
    </recommendedName>
</protein>
<gene>
    <name evidence="1" type="primary">mscL</name>
    <name type="ordered locus">XC_1009</name>
</gene>
<organism>
    <name type="scientific">Xanthomonas campestris pv. campestris (strain 8004)</name>
    <dbReference type="NCBI Taxonomy" id="314565"/>
    <lineage>
        <taxon>Bacteria</taxon>
        <taxon>Pseudomonadati</taxon>
        <taxon>Pseudomonadota</taxon>
        <taxon>Gammaproteobacteria</taxon>
        <taxon>Lysobacterales</taxon>
        <taxon>Lysobacteraceae</taxon>
        <taxon>Xanthomonas</taxon>
    </lineage>
</organism>
<accession>Q4UXZ0</accession>
<comment type="function">
    <text evidence="1">Channel that opens in response to stretch forces in the membrane lipid bilayer. May participate in the regulation of osmotic pressure changes within the cell.</text>
</comment>
<comment type="subunit">
    <text evidence="1">Homopentamer.</text>
</comment>
<comment type="subcellular location">
    <subcellularLocation>
        <location evidence="1">Cell inner membrane</location>
        <topology evidence="1">Multi-pass membrane protein</topology>
    </subcellularLocation>
</comment>
<comment type="similarity">
    <text evidence="1">Belongs to the MscL family.</text>
</comment>
<evidence type="ECO:0000255" key="1">
    <source>
        <dbReference type="HAMAP-Rule" id="MF_00115"/>
    </source>
</evidence>
<feature type="chain" id="PRO_0000238051" description="Large-conductance mechanosensitive channel">
    <location>
        <begin position="1"/>
        <end position="143"/>
    </location>
</feature>
<feature type="transmembrane region" description="Helical" evidence="1">
    <location>
        <begin position="16"/>
        <end position="36"/>
    </location>
</feature>
<feature type="transmembrane region" description="Helical" evidence="1">
    <location>
        <begin position="84"/>
        <end position="104"/>
    </location>
</feature>
<keyword id="KW-0997">Cell inner membrane</keyword>
<keyword id="KW-1003">Cell membrane</keyword>
<keyword id="KW-0407">Ion channel</keyword>
<keyword id="KW-0406">Ion transport</keyword>
<keyword id="KW-0472">Membrane</keyword>
<keyword id="KW-0812">Transmembrane</keyword>
<keyword id="KW-1133">Transmembrane helix</keyword>
<keyword id="KW-0813">Transport</keyword>
<reference key="1">
    <citation type="journal article" date="2005" name="Genome Res.">
        <title>Comparative and functional genomic analyses of the pathogenicity of phytopathogen Xanthomonas campestris pv. campestris.</title>
        <authorList>
            <person name="Qian W."/>
            <person name="Jia Y."/>
            <person name="Ren S.-X."/>
            <person name="He Y.-Q."/>
            <person name="Feng J.-X."/>
            <person name="Lu L.-F."/>
            <person name="Sun Q."/>
            <person name="Ying G."/>
            <person name="Tang D.-J."/>
            <person name="Tang H."/>
            <person name="Wu W."/>
            <person name="Hao P."/>
            <person name="Wang L."/>
            <person name="Jiang B.-L."/>
            <person name="Zeng S."/>
            <person name="Gu W.-Y."/>
            <person name="Lu G."/>
            <person name="Rong L."/>
            <person name="Tian Y."/>
            <person name="Yao Z."/>
            <person name="Fu G."/>
            <person name="Chen B."/>
            <person name="Fang R."/>
            <person name="Qiang B."/>
            <person name="Chen Z."/>
            <person name="Zhao G.-P."/>
            <person name="Tang J.-L."/>
            <person name="He C."/>
        </authorList>
    </citation>
    <scope>NUCLEOTIDE SEQUENCE [LARGE SCALE GENOMIC DNA]</scope>
    <source>
        <strain>8004</strain>
    </source>
</reference>
<sequence length="143" mass="15486">MGMVSEFKQFAMRGNVIDLAVGVVIGAAFGKIVTALVEKIIMPPIGWAIGNVDFSRLAWVLKPAGVDATGKEIPAVVIGYGDFINTVVQFVIIAFAIFLVVKLINRLSQRKPDAPKGPSEEVLLLREIRDSLKNDTLKNPTVP</sequence>
<dbReference type="EMBL" id="CP000050">
    <property type="protein sequence ID" value="AAY48083.1"/>
    <property type="molecule type" value="Genomic_DNA"/>
</dbReference>
<dbReference type="RefSeq" id="WP_011038263.1">
    <property type="nucleotide sequence ID" value="NZ_CP155948.1"/>
</dbReference>
<dbReference type="SMR" id="Q4UXZ0"/>
<dbReference type="KEGG" id="xcb:XC_1009"/>
<dbReference type="HOGENOM" id="CLU_095787_0_0_6"/>
<dbReference type="Proteomes" id="UP000000420">
    <property type="component" value="Chromosome"/>
</dbReference>
<dbReference type="GO" id="GO:0005886">
    <property type="term" value="C:plasma membrane"/>
    <property type="evidence" value="ECO:0007669"/>
    <property type="project" value="UniProtKB-SubCell"/>
</dbReference>
<dbReference type="GO" id="GO:0008381">
    <property type="term" value="F:mechanosensitive monoatomic ion channel activity"/>
    <property type="evidence" value="ECO:0007669"/>
    <property type="project" value="UniProtKB-UniRule"/>
</dbReference>
<dbReference type="FunFam" id="1.10.1200.120:FF:000001">
    <property type="entry name" value="Large-conductance mechanosensitive channel"/>
    <property type="match status" value="1"/>
</dbReference>
<dbReference type="Gene3D" id="1.10.1200.120">
    <property type="entry name" value="Large-conductance mechanosensitive channel, MscL, domain 1"/>
    <property type="match status" value="1"/>
</dbReference>
<dbReference type="HAMAP" id="MF_00115">
    <property type="entry name" value="MscL"/>
    <property type="match status" value="1"/>
</dbReference>
<dbReference type="InterPro" id="IPR019823">
    <property type="entry name" value="Mechanosensitive_channel_CS"/>
</dbReference>
<dbReference type="InterPro" id="IPR001185">
    <property type="entry name" value="MS_channel"/>
</dbReference>
<dbReference type="InterPro" id="IPR037673">
    <property type="entry name" value="MSC/AndL"/>
</dbReference>
<dbReference type="InterPro" id="IPR036019">
    <property type="entry name" value="MscL_channel"/>
</dbReference>
<dbReference type="NCBIfam" id="TIGR00220">
    <property type="entry name" value="mscL"/>
    <property type="match status" value="1"/>
</dbReference>
<dbReference type="NCBIfam" id="NF001843">
    <property type="entry name" value="PRK00567.1-4"/>
    <property type="match status" value="1"/>
</dbReference>
<dbReference type="PANTHER" id="PTHR30266:SF2">
    <property type="entry name" value="LARGE-CONDUCTANCE MECHANOSENSITIVE CHANNEL"/>
    <property type="match status" value="1"/>
</dbReference>
<dbReference type="PANTHER" id="PTHR30266">
    <property type="entry name" value="MECHANOSENSITIVE CHANNEL MSCL"/>
    <property type="match status" value="1"/>
</dbReference>
<dbReference type="Pfam" id="PF01741">
    <property type="entry name" value="MscL"/>
    <property type="match status" value="1"/>
</dbReference>
<dbReference type="PRINTS" id="PR01264">
    <property type="entry name" value="MECHCHANNEL"/>
</dbReference>
<dbReference type="SUPFAM" id="SSF81330">
    <property type="entry name" value="Gated mechanosensitive channel"/>
    <property type="match status" value="1"/>
</dbReference>
<dbReference type="PROSITE" id="PS01327">
    <property type="entry name" value="MSCL"/>
    <property type="match status" value="1"/>
</dbReference>
<proteinExistence type="inferred from homology"/>